<gene>
    <name evidence="1" type="primary">znuC</name>
    <name type="ordered locus">RBE_1422</name>
</gene>
<sequence length="233" mass="26028">MKKPIIEFHNVSKKFGNKLPINNVSFTVKKNNITTLIGPNGAGKTTIVRLMLGLEKPTSGEIIIDPRLKIGYVPQKFNLSSDLPITVKKFLDLLAPNNLTNDIKEIHSFIDLERLKDQKISTLSGGQFQKIVLASSLLSKPDLIILDEPLQSLDVTSQQEFYQLISLIRKKLDITVFMISHDLFTVIKNSDQVICLNGHICCTGTPNAITPNSDFSNALSSLGFYTHHHDHKH</sequence>
<proteinExistence type="inferred from homology"/>
<keyword id="KW-0067">ATP-binding</keyword>
<keyword id="KW-0997">Cell inner membrane</keyword>
<keyword id="KW-1003">Cell membrane</keyword>
<keyword id="KW-0406">Ion transport</keyword>
<keyword id="KW-0472">Membrane</keyword>
<keyword id="KW-0547">Nucleotide-binding</keyword>
<keyword id="KW-1278">Translocase</keyword>
<keyword id="KW-0813">Transport</keyword>
<keyword id="KW-0862">Zinc</keyword>
<keyword id="KW-0864">Zinc transport</keyword>
<protein>
    <recommendedName>
        <fullName evidence="1">Zinc import ATP-binding protein ZnuC</fullName>
        <ecNumber evidence="1">7.2.2.20</ecNumber>
    </recommendedName>
</protein>
<comment type="function">
    <text evidence="1">Part of the ABC transporter complex ZnuABC involved in zinc import. Responsible for energy coupling to the transport system.</text>
</comment>
<comment type="catalytic activity">
    <reaction evidence="1">
        <text>Zn(2+)(out) + ATP(in) + H2O(in) = Zn(2+)(in) + ADP(in) + phosphate(in) + H(+)(in)</text>
        <dbReference type="Rhea" id="RHEA:29795"/>
        <dbReference type="ChEBI" id="CHEBI:15377"/>
        <dbReference type="ChEBI" id="CHEBI:15378"/>
        <dbReference type="ChEBI" id="CHEBI:29105"/>
        <dbReference type="ChEBI" id="CHEBI:30616"/>
        <dbReference type="ChEBI" id="CHEBI:43474"/>
        <dbReference type="ChEBI" id="CHEBI:456216"/>
        <dbReference type="EC" id="7.2.2.20"/>
    </reaction>
</comment>
<comment type="subunit">
    <text evidence="1">The complex is composed of two ATP-binding proteins (ZnuC), two transmembrane proteins (ZnuB) and a solute-binding protein (ZnuA).</text>
</comment>
<comment type="subcellular location">
    <subcellularLocation>
        <location evidence="1">Cell inner membrane</location>
        <topology evidence="1">Peripheral membrane protein</topology>
    </subcellularLocation>
</comment>
<comment type="similarity">
    <text evidence="1">Belongs to the ABC transporter superfamily. Zinc importer (TC 3.A.1.15.5) family.</text>
</comment>
<organism>
    <name type="scientific">Rickettsia bellii (strain RML369-C)</name>
    <dbReference type="NCBI Taxonomy" id="336407"/>
    <lineage>
        <taxon>Bacteria</taxon>
        <taxon>Pseudomonadati</taxon>
        <taxon>Pseudomonadota</taxon>
        <taxon>Alphaproteobacteria</taxon>
        <taxon>Rickettsiales</taxon>
        <taxon>Rickettsiaceae</taxon>
        <taxon>Rickettsieae</taxon>
        <taxon>Rickettsia</taxon>
        <taxon>belli group</taxon>
    </lineage>
</organism>
<evidence type="ECO:0000255" key="1">
    <source>
        <dbReference type="HAMAP-Rule" id="MF_01725"/>
    </source>
</evidence>
<name>ZNUC_RICBR</name>
<dbReference type="EC" id="7.2.2.20" evidence="1"/>
<dbReference type="EMBL" id="CP000087">
    <property type="protein sequence ID" value="ABE05503.1"/>
    <property type="molecule type" value="Genomic_DNA"/>
</dbReference>
<dbReference type="RefSeq" id="WP_011478072.1">
    <property type="nucleotide sequence ID" value="NC_007940.1"/>
</dbReference>
<dbReference type="SMR" id="Q1RGL1"/>
<dbReference type="KEGG" id="rbe:RBE_1422"/>
<dbReference type="eggNOG" id="COG1121">
    <property type="taxonomic scope" value="Bacteria"/>
</dbReference>
<dbReference type="HOGENOM" id="CLU_000604_1_11_5"/>
<dbReference type="OrthoDB" id="9780942at2"/>
<dbReference type="Proteomes" id="UP000001951">
    <property type="component" value="Chromosome"/>
</dbReference>
<dbReference type="GO" id="GO:0005886">
    <property type="term" value="C:plasma membrane"/>
    <property type="evidence" value="ECO:0007669"/>
    <property type="project" value="UniProtKB-SubCell"/>
</dbReference>
<dbReference type="GO" id="GO:0015633">
    <property type="term" value="F:ABC-type zinc transporter activity"/>
    <property type="evidence" value="ECO:0007669"/>
    <property type="project" value="UniProtKB-EC"/>
</dbReference>
<dbReference type="GO" id="GO:0005524">
    <property type="term" value="F:ATP binding"/>
    <property type="evidence" value="ECO:0007669"/>
    <property type="project" value="UniProtKB-KW"/>
</dbReference>
<dbReference type="GO" id="GO:0016887">
    <property type="term" value="F:ATP hydrolysis activity"/>
    <property type="evidence" value="ECO:0007669"/>
    <property type="project" value="InterPro"/>
</dbReference>
<dbReference type="GO" id="GO:0010043">
    <property type="term" value="P:response to zinc ion"/>
    <property type="evidence" value="ECO:0007669"/>
    <property type="project" value="TreeGrafter"/>
</dbReference>
<dbReference type="Gene3D" id="3.40.50.300">
    <property type="entry name" value="P-loop containing nucleotide triphosphate hydrolases"/>
    <property type="match status" value="1"/>
</dbReference>
<dbReference type="InterPro" id="IPR003593">
    <property type="entry name" value="AAA+_ATPase"/>
</dbReference>
<dbReference type="InterPro" id="IPR003439">
    <property type="entry name" value="ABC_transporter-like_ATP-bd"/>
</dbReference>
<dbReference type="InterPro" id="IPR017871">
    <property type="entry name" value="ABC_transporter-like_CS"/>
</dbReference>
<dbReference type="InterPro" id="IPR050153">
    <property type="entry name" value="Metal_Ion_Import_ABC"/>
</dbReference>
<dbReference type="InterPro" id="IPR027417">
    <property type="entry name" value="P-loop_NTPase"/>
</dbReference>
<dbReference type="PANTHER" id="PTHR42734">
    <property type="entry name" value="METAL TRANSPORT SYSTEM ATP-BINDING PROTEIN TM_0124-RELATED"/>
    <property type="match status" value="1"/>
</dbReference>
<dbReference type="PANTHER" id="PTHR42734:SF9">
    <property type="entry name" value="ZINC IMPORT ATP-BINDING PROTEIN ZNUC"/>
    <property type="match status" value="1"/>
</dbReference>
<dbReference type="Pfam" id="PF00005">
    <property type="entry name" value="ABC_tran"/>
    <property type="match status" value="1"/>
</dbReference>
<dbReference type="SMART" id="SM00382">
    <property type="entry name" value="AAA"/>
    <property type="match status" value="1"/>
</dbReference>
<dbReference type="SUPFAM" id="SSF52540">
    <property type="entry name" value="P-loop containing nucleoside triphosphate hydrolases"/>
    <property type="match status" value="1"/>
</dbReference>
<dbReference type="PROSITE" id="PS00211">
    <property type="entry name" value="ABC_TRANSPORTER_1"/>
    <property type="match status" value="1"/>
</dbReference>
<dbReference type="PROSITE" id="PS50893">
    <property type="entry name" value="ABC_TRANSPORTER_2"/>
    <property type="match status" value="1"/>
</dbReference>
<dbReference type="PROSITE" id="PS51298">
    <property type="entry name" value="ZNUC"/>
    <property type="match status" value="1"/>
</dbReference>
<reference key="1">
    <citation type="journal article" date="2006" name="PLoS Genet.">
        <title>Genome sequence of Rickettsia bellii illuminates the role of amoebae in gene exchanges between intracellular pathogens.</title>
        <authorList>
            <person name="Ogata H."/>
            <person name="La Scola B."/>
            <person name="Audic S."/>
            <person name="Renesto P."/>
            <person name="Blanc G."/>
            <person name="Robert C."/>
            <person name="Fournier P.-E."/>
            <person name="Claverie J.-M."/>
            <person name="Raoult D."/>
        </authorList>
    </citation>
    <scope>NUCLEOTIDE SEQUENCE [LARGE SCALE GENOMIC DNA]</scope>
    <source>
        <strain>RML369-C</strain>
    </source>
</reference>
<feature type="chain" id="PRO_0000281539" description="Zinc import ATP-binding protein ZnuC">
    <location>
        <begin position="1"/>
        <end position="233"/>
    </location>
</feature>
<feature type="domain" description="ABC transporter" evidence="1">
    <location>
        <begin position="6"/>
        <end position="222"/>
    </location>
</feature>
<feature type="binding site" evidence="1">
    <location>
        <begin position="38"/>
        <end position="45"/>
    </location>
    <ligand>
        <name>ATP</name>
        <dbReference type="ChEBI" id="CHEBI:30616"/>
    </ligand>
</feature>
<accession>Q1RGL1</accession>